<name>GPDA_BACP2</name>
<feature type="chain" id="PRO_1000060781" description="Glycerol-3-phosphate dehydrogenase [NAD(P)+]">
    <location>
        <begin position="1"/>
        <end position="345"/>
    </location>
</feature>
<feature type="active site" description="Proton acceptor" evidence="1">
    <location>
        <position position="192"/>
    </location>
</feature>
<feature type="binding site" evidence="1">
    <location>
        <position position="11"/>
    </location>
    <ligand>
        <name>NADPH</name>
        <dbReference type="ChEBI" id="CHEBI:57783"/>
    </ligand>
</feature>
<feature type="binding site" evidence="1">
    <location>
        <position position="12"/>
    </location>
    <ligand>
        <name>NADPH</name>
        <dbReference type="ChEBI" id="CHEBI:57783"/>
    </ligand>
</feature>
<feature type="binding site" evidence="1">
    <location>
        <position position="32"/>
    </location>
    <ligand>
        <name>NADPH</name>
        <dbReference type="ChEBI" id="CHEBI:57783"/>
    </ligand>
</feature>
<feature type="binding site" evidence="1">
    <location>
        <position position="33"/>
    </location>
    <ligand>
        <name>NADPH</name>
        <dbReference type="ChEBI" id="CHEBI:57783"/>
    </ligand>
</feature>
<feature type="binding site" evidence="1">
    <location>
        <position position="106"/>
    </location>
    <ligand>
        <name>NADPH</name>
        <dbReference type="ChEBI" id="CHEBI:57783"/>
    </ligand>
</feature>
<feature type="binding site" evidence="1">
    <location>
        <position position="106"/>
    </location>
    <ligand>
        <name>sn-glycerol 3-phosphate</name>
        <dbReference type="ChEBI" id="CHEBI:57597"/>
    </ligand>
</feature>
<feature type="binding site" evidence="1">
    <location>
        <position position="137"/>
    </location>
    <ligand>
        <name>sn-glycerol 3-phosphate</name>
        <dbReference type="ChEBI" id="CHEBI:57597"/>
    </ligand>
</feature>
<feature type="binding site" evidence="1">
    <location>
        <position position="139"/>
    </location>
    <ligand>
        <name>sn-glycerol 3-phosphate</name>
        <dbReference type="ChEBI" id="CHEBI:57597"/>
    </ligand>
</feature>
<feature type="binding site" evidence="1">
    <location>
        <position position="141"/>
    </location>
    <ligand>
        <name>NADPH</name>
        <dbReference type="ChEBI" id="CHEBI:57783"/>
    </ligand>
</feature>
<feature type="binding site" evidence="1">
    <location>
        <position position="192"/>
    </location>
    <ligand>
        <name>sn-glycerol 3-phosphate</name>
        <dbReference type="ChEBI" id="CHEBI:57597"/>
    </ligand>
</feature>
<feature type="binding site" evidence="1">
    <location>
        <position position="245"/>
    </location>
    <ligand>
        <name>sn-glycerol 3-phosphate</name>
        <dbReference type="ChEBI" id="CHEBI:57597"/>
    </ligand>
</feature>
<feature type="binding site" evidence="1">
    <location>
        <position position="255"/>
    </location>
    <ligand>
        <name>sn-glycerol 3-phosphate</name>
        <dbReference type="ChEBI" id="CHEBI:57597"/>
    </ligand>
</feature>
<feature type="binding site" evidence="1">
    <location>
        <position position="256"/>
    </location>
    <ligand>
        <name>NADPH</name>
        <dbReference type="ChEBI" id="CHEBI:57783"/>
    </ligand>
</feature>
<feature type="binding site" evidence="1">
    <location>
        <position position="256"/>
    </location>
    <ligand>
        <name>sn-glycerol 3-phosphate</name>
        <dbReference type="ChEBI" id="CHEBI:57597"/>
    </ligand>
</feature>
<feature type="binding site" evidence="1">
    <location>
        <position position="257"/>
    </location>
    <ligand>
        <name>sn-glycerol 3-phosphate</name>
        <dbReference type="ChEBI" id="CHEBI:57597"/>
    </ligand>
</feature>
<feature type="binding site" evidence="1">
    <location>
        <position position="280"/>
    </location>
    <ligand>
        <name>NADPH</name>
        <dbReference type="ChEBI" id="CHEBI:57783"/>
    </ligand>
</feature>
<feature type="binding site" evidence="1">
    <location>
        <position position="282"/>
    </location>
    <ligand>
        <name>NADPH</name>
        <dbReference type="ChEBI" id="CHEBI:57783"/>
    </ligand>
</feature>
<dbReference type="EC" id="1.1.1.94" evidence="1"/>
<dbReference type="EMBL" id="CP000813">
    <property type="protein sequence ID" value="ABV62684.1"/>
    <property type="molecule type" value="Genomic_DNA"/>
</dbReference>
<dbReference type="RefSeq" id="WP_012010392.1">
    <property type="nucleotide sequence ID" value="NC_009848.4"/>
</dbReference>
<dbReference type="SMR" id="A8FEL7"/>
<dbReference type="STRING" id="315750.BPUM_2014"/>
<dbReference type="GeneID" id="5621280"/>
<dbReference type="KEGG" id="bpu:BPUM_2014"/>
<dbReference type="eggNOG" id="COG0240">
    <property type="taxonomic scope" value="Bacteria"/>
</dbReference>
<dbReference type="HOGENOM" id="CLU_033449_0_2_9"/>
<dbReference type="OrthoDB" id="9812273at2"/>
<dbReference type="UniPathway" id="UPA00940"/>
<dbReference type="Proteomes" id="UP000001355">
    <property type="component" value="Chromosome"/>
</dbReference>
<dbReference type="GO" id="GO:0005829">
    <property type="term" value="C:cytosol"/>
    <property type="evidence" value="ECO:0007669"/>
    <property type="project" value="TreeGrafter"/>
</dbReference>
<dbReference type="GO" id="GO:0047952">
    <property type="term" value="F:glycerol-3-phosphate dehydrogenase [NAD(P)+] activity"/>
    <property type="evidence" value="ECO:0007669"/>
    <property type="project" value="UniProtKB-UniRule"/>
</dbReference>
<dbReference type="GO" id="GO:0051287">
    <property type="term" value="F:NAD binding"/>
    <property type="evidence" value="ECO:0007669"/>
    <property type="project" value="InterPro"/>
</dbReference>
<dbReference type="GO" id="GO:0005975">
    <property type="term" value="P:carbohydrate metabolic process"/>
    <property type="evidence" value="ECO:0007669"/>
    <property type="project" value="InterPro"/>
</dbReference>
<dbReference type="GO" id="GO:0046167">
    <property type="term" value="P:glycerol-3-phosphate biosynthetic process"/>
    <property type="evidence" value="ECO:0007669"/>
    <property type="project" value="UniProtKB-UniRule"/>
</dbReference>
<dbReference type="GO" id="GO:0046168">
    <property type="term" value="P:glycerol-3-phosphate catabolic process"/>
    <property type="evidence" value="ECO:0007669"/>
    <property type="project" value="InterPro"/>
</dbReference>
<dbReference type="GO" id="GO:0006650">
    <property type="term" value="P:glycerophospholipid metabolic process"/>
    <property type="evidence" value="ECO:0007669"/>
    <property type="project" value="UniProtKB-UniRule"/>
</dbReference>
<dbReference type="GO" id="GO:0008654">
    <property type="term" value="P:phospholipid biosynthetic process"/>
    <property type="evidence" value="ECO:0007669"/>
    <property type="project" value="UniProtKB-KW"/>
</dbReference>
<dbReference type="FunFam" id="1.10.1040.10:FF:000001">
    <property type="entry name" value="Glycerol-3-phosphate dehydrogenase [NAD(P)+]"/>
    <property type="match status" value="1"/>
</dbReference>
<dbReference type="FunFam" id="3.40.50.720:FF:000019">
    <property type="entry name" value="Glycerol-3-phosphate dehydrogenase [NAD(P)+]"/>
    <property type="match status" value="1"/>
</dbReference>
<dbReference type="Gene3D" id="1.10.1040.10">
    <property type="entry name" value="N-(1-d-carboxylethyl)-l-norvaline Dehydrogenase, domain 2"/>
    <property type="match status" value="1"/>
</dbReference>
<dbReference type="Gene3D" id="3.40.50.720">
    <property type="entry name" value="NAD(P)-binding Rossmann-like Domain"/>
    <property type="match status" value="1"/>
</dbReference>
<dbReference type="HAMAP" id="MF_00394">
    <property type="entry name" value="NAD_Glyc3P_dehydrog"/>
    <property type="match status" value="1"/>
</dbReference>
<dbReference type="InterPro" id="IPR008927">
    <property type="entry name" value="6-PGluconate_DH-like_C_sf"/>
</dbReference>
<dbReference type="InterPro" id="IPR013328">
    <property type="entry name" value="6PGD_dom2"/>
</dbReference>
<dbReference type="InterPro" id="IPR006168">
    <property type="entry name" value="G3P_DH_NAD-dep"/>
</dbReference>
<dbReference type="InterPro" id="IPR006109">
    <property type="entry name" value="G3P_DH_NAD-dep_C"/>
</dbReference>
<dbReference type="InterPro" id="IPR011128">
    <property type="entry name" value="G3P_DH_NAD-dep_N"/>
</dbReference>
<dbReference type="InterPro" id="IPR036291">
    <property type="entry name" value="NAD(P)-bd_dom_sf"/>
</dbReference>
<dbReference type="NCBIfam" id="NF000940">
    <property type="entry name" value="PRK00094.1-2"/>
    <property type="match status" value="1"/>
</dbReference>
<dbReference type="NCBIfam" id="NF000941">
    <property type="entry name" value="PRK00094.1-3"/>
    <property type="match status" value="1"/>
</dbReference>
<dbReference type="NCBIfam" id="NF000942">
    <property type="entry name" value="PRK00094.1-4"/>
    <property type="match status" value="1"/>
</dbReference>
<dbReference type="PANTHER" id="PTHR11728">
    <property type="entry name" value="GLYCEROL-3-PHOSPHATE DEHYDROGENASE"/>
    <property type="match status" value="1"/>
</dbReference>
<dbReference type="PANTHER" id="PTHR11728:SF1">
    <property type="entry name" value="GLYCEROL-3-PHOSPHATE DEHYDROGENASE [NAD(+)] 2, CHLOROPLASTIC"/>
    <property type="match status" value="1"/>
</dbReference>
<dbReference type="Pfam" id="PF07479">
    <property type="entry name" value="NAD_Gly3P_dh_C"/>
    <property type="match status" value="1"/>
</dbReference>
<dbReference type="Pfam" id="PF01210">
    <property type="entry name" value="NAD_Gly3P_dh_N"/>
    <property type="match status" value="1"/>
</dbReference>
<dbReference type="PIRSF" id="PIRSF000114">
    <property type="entry name" value="Glycerol-3-P_dh"/>
    <property type="match status" value="1"/>
</dbReference>
<dbReference type="PRINTS" id="PR00077">
    <property type="entry name" value="GPDHDRGNASE"/>
</dbReference>
<dbReference type="SUPFAM" id="SSF48179">
    <property type="entry name" value="6-phosphogluconate dehydrogenase C-terminal domain-like"/>
    <property type="match status" value="1"/>
</dbReference>
<dbReference type="SUPFAM" id="SSF51735">
    <property type="entry name" value="NAD(P)-binding Rossmann-fold domains"/>
    <property type="match status" value="1"/>
</dbReference>
<dbReference type="PROSITE" id="PS00957">
    <property type="entry name" value="NAD_G3PDH"/>
    <property type="match status" value="1"/>
</dbReference>
<gene>
    <name evidence="1" type="primary">gpsA</name>
    <name type="ordered locus">BPUM_2014</name>
</gene>
<proteinExistence type="inferred from homology"/>
<organism>
    <name type="scientific">Bacillus pumilus (strain SAFR-032)</name>
    <dbReference type="NCBI Taxonomy" id="315750"/>
    <lineage>
        <taxon>Bacteria</taxon>
        <taxon>Bacillati</taxon>
        <taxon>Bacillota</taxon>
        <taxon>Bacilli</taxon>
        <taxon>Bacillales</taxon>
        <taxon>Bacillaceae</taxon>
        <taxon>Bacillus</taxon>
    </lineage>
</organism>
<reference key="1">
    <citation type="journal article" date="2007" name="PLoS ONE">
        <title>Paradoxical DNA repair and peroxide resistance gene conservation in Bacillus pumilus SAFR-032.</title>
        <authorList>
            <person name="Gioia J."/>
            <person name="Yerrapragada S."/>
            <person name="Qin X."/>
            <person name="Jiang H."/>
            <person name="Igboeli O.C."/>
            <person name="Muzny D."/>
            <person name="Dugan-Rocha S."/>
            <person name="Ding Y."/>
            <person name="Hawes A."/>
            <person name="Liu W."/>
            <person name="Perez L."/>
            <person name="Kovar C."/>
            <person name="Dinh H."/>
            <person name="Lee S."/>
            <person name="Nazareth L."/>
            <person name="Blyth P."/>
            <person name="Holder M."/>
            <person name="Buhay C."/>
            <person name="Tirumalai M.R."/>
            <person name="Liu Y."/>
            <person name="Dasgupta I."/>
            <person name="Bokhetache L."/>
            <person name="Fujita M."/>
            <person name="Karouia F."/>
            <person name="Eswara Moorthy P."/>
            <person name="Siefert J."/>
            <person name="Uzman A."/>
            <person name="Buzumbo P."/>
            <person name="Verma A."/>
            <person name="Zwiya H."/>
            <person name="McWilliams B.D."/>
            <person name="Olowu A."/>
            <person name="Clinkenbeard K.D."/>
            <person name="Newcombe D."/>
            <person name="Golebiewski L."/>
            <person name="Petrosino J.F."/>
            <person name="Nicholson W.L."/>
            <person name="Fox G.E."/>
            <person name="Venkateswaran K."/>
            <person name="Highlander S.K."/>
            <person name="Weinstock G.M."/>
        </authorList>
    </citation>
    <scope>NUCLEOTIDE SEQUENCE [LARGE SCALE GENOMIC DNA]</scope>
    <source>
        <strain>SAFR-032</strain>
    </source>
</reference>
<sequence>MKKITVLGAGSWGTALALVLADNHHDVHMWGHRQELIDQIDEKHENHDYLPNVALPASIKATTDMKQALEGTDAIIVAVPTKAIREVLKRANELITSKVPFVHVSKGIEPDTLLRISQMIEQEVPDEKREAVVVLSGPSHAEEVGLRHPTTVTVSSENIEAAQFVQDLFMNNNFRVYTNPDVIGVEIGGALKNIIALAAGITDGLGYGDNAKAALITRGLAEIARLGTQMGGNPLTFAGLTGVGDLIVTCTSVHSRNWRCGNLLGKGYKLEEVLEKMGMVVEGVRTTKGAYQLSKEYKVSMPITEALYHVLFEGKKVDDAVESLMARVKTHEMEDLVNMFENQTK</sequence>
<protein>
    <recommendedName>
        <fullName evidence="1">Glycerol-3-phosphate dehydrogenase [NAD(P)+]</fullName>
        <ecNumber evidence="1">1.1.1.94</ecNumber>
    </recommendedName>
    <alternativeName>
        <fullName evidence="1">NAD(P)(+)-dependent glycerol-3-phosphate dehydrogenase</fullName>
    </alternativeName>
    <alternativeName>
        <fullName evidence="1">NAD(P)H-dependent dihydroxyacetone-phosphate reductase</fullName>
    </alternativeName>
</protein>
<comment type="function">
    <text evidence="1">Catalyzes the reduction of the glycolytic intermediate dihydroxyacetone phosphate (DHAP) to sn-glycerol 3-phosphate (G3P), the key precursor for phospholipid synthesis.</text>
</comment>
<comment type="catalytic activity">
    <reaction evidence="1">
        <text>sn-glycerol 3-phosphate + NAD(+) = dihydroxyacetone phosphate + NADH + H(+)</text>
        <dbReference type="Rhea" id="RHEA:11092"/>
        <dbReference type="ChEBI" id="CHEBI:15378"/>
        <dbReference type="ChEBI" id="CHEBI:57540"/>
        <dbReference type="ChEBI" id="CHEBI:57597"/>
        <dbReference type="ChEBI" id="CHEBI:57642"/>
        <dbReference type="ChEBI" id="CHEBI:57945"/>
        <dbReference type="EC" id="1.1.1.94"/>
    </reaction>
    <physiologicalReaction direction="right-to-left" evidence="1">
        <dbReference type="Rhea" id="RHEA:11094"/>
    </physiologicalReaction>
</comment>
<comment type="catalytic activity">
    <reaction evidence="1">
        <text>sn-glycerol 3-phosphate + NADP(+) = dihydroxyacetone phosphate + NADPH + H(+)</text>
        <dbReference type="Rhea" id="RHEA:11096"/>
        <dbReference type="ChEBI" id="CHEBI:15378"/>
        <dbReference type="ChEBI" id="CHEBI:57597"/>
        <dbReference type="ChEBI" id="CHEBI:57642"/>
        <dbReference type="ChEBI" id="CHEBI:57783"/>
        <dbReference type="ChEBI" id="CHEBI:58349"/>
        <dbReference type="EC" id="1.1.1.94"/>
    </reaction>
    <physiologicalReaction direction="right-to-left" evidence="1">
        <dbReference type="Rhea" id="RHEA:11098"/>
    </physiologicalReaction>
</comment>
<comment type="pathway">
    <text evidence="1">Membrane lipid metabolism; glycerophospholipid metabolism.</text>
</comment>
<comment type="subcellular location">
    <subcellularLocation>
        <location evidence="1">Cytoplasm</location>
    </subcellularLocation>
</comment>
<comment type="similarity">
    <text evidence="1">Belongs to the NAD-dependent glycerol-3-phosphate dehydrogenase family.</text>
</comment>
<accession>A8FEL7</accession>
<keyword id="KW-0963">Cytoplasm</keyword>
<keyword id="KW-0444">Lipid biosynthesis</keyword>
<keyword id="KW-0443">Lipid metabolism</keyword>
<keyword id="KW-0520">NAD</keyword>
<keyword id="KW-0521">NADP</keyword>
<keyword id="KW-0547">Nucleotide-binding</keyword>
<keyword id="KW-0560">Oxidoreductase</keyword>
<keyword id="KW-0594">Phospholipid biosynthesis</keyword>
<keyword id="KW-1208">Phospholipid metabolism</keyword>
<evidence type="ECO:0000255" key="1">
    <source>
        <dbReference type="HAMAP-Rule" id="MF_00394"/>
    </source>
</evidence>